<comment type="function">
    <text evidence="1">This is one of the proteins that bind and probably mediate the attachment of the 5S RNA into the large ribosomal subunit, where it forms part of the central protuberance.</text>
</comment>
<comment type="subunit">
    <text evidence="1">Part of the 50S ribosomal subunit; part of the 5S rRNA/L5/L18/L25 subcomplex. Contacts the 5S and 23S rRNAs.</text>
</comment>
<comment type="similarity">
    <text evidence="1">Belongs to the universal ribosomal protein uL18 family.</text>
</comment>
<name>RL18_LACP7</name>
<accession>A9KJH8</accession>
<protein>
    <recommendedName>
        <fullName evidence="1">Large ribosomal subunit protein uL18</fullName>
    </recommendedName>
    <alternativeName>
        <fullName evidence="2">50S ribosomal protein L18</fullName>
    </alternativeName>
</protein>
<evidence type="ECO:0000255" key="1">
    <source>
        <dbReference type="HAMAP-Rule" id="MF_01337"/>
    </source>
</evidence>
<evidence type="ECO:0000305" key="2"/>
<feature type="chain" id="PRO_1000086659" description="Large ribosomal subunit protein uL18">
    <location>
        <begin position="1"/>
        <end position="122"/>
    </location>
</feature>
<reference key="1">
    <citation type="submission" date="2007-11" db="EMBL/GenBank/DDBJ databases">
        <title>Complete genome sequence of Clostridium phytofermentans ISDg.</title>
        <authorList>
            <person name="Leschine S.B."/>
            <person name="Warnick T.A."/>
            <person name="Blanchard J.L."/>
            <person name="Schnell D.J."/>
            <person name="Petit E.L."/>
            <person name="LaTouf W.G."/>
            <person name="Copeland A."/>
            <person name="Lucas S."/>
            <person name="Lapidus A."/>
            <person name="Barry K."/>
            <person name="Glavina del Rio T."/>
            <person name="Dalin E."/>
            <person name="Tice H."/>
            <person name="Pitluck S."/>
            <person name="Kiss H."/>
            <person name="Brettin T."/>
            <person name="Bruce D."/>
            <person name="Detter J.C."/>
            <person name="Han C."/>
            <person name="Kuske C."/>
            <person name="Schmutz J."/>
            <person name="Larimer F."/>
            <person name="Land M."/>
            <person name="Hauser L."/>
            <person name="Kyrpides N."/>
            <person name="Kim E.A."/>
            <person name="Richardson P."/>
        </authorList>
    </citation>
    <scope>NUCLEOTIDE SEQUENCE [LARGE SCALE GENOMIC DNA]</scope>
    <source>
        <strain>ATCC 700394 / DSM 18823 / ISDg</strain>
    </source>
</reference>
<proteinExistence type="inferred from homology"/>
<gene>
    <name evidence="1" type="primary">rplR</name>
    <name type="ordered locus">Cphy_3651</name>
</gene>
<keyword id="KW-1185">Reference proteome</keyword>
<keyword id="KW-0687">Ribonucleoprotein</keyword>
<keyword id="KW-0689">Ribosomal protein</keyword>
<keyword id="KW-0694">RNA-binding</keyword>
<keyword id="KW-0699">rRNA-binding</keyword>
<organism>
    <name type="scientific">Lachnoclostridium phytofermentans (strain ATCC 700394 / DSM 18823 / ISDg)</name>
    <name type="common">Clostridium phytofermentans</name>
    <dbReference type="NCBI Taxonomy" id="357809"/>
    <lineage>
        <taxon>Bacteria</taxon>
        <taxon>Bacillati</taxon>
        <taxon>Bacillota</taxon>
        <taxon>Clostridia</taxon>
        <taxon>Lachnospirales</taxon>
        <taxon>Lachnospiraceae</taxon>
    </lineage>
</organism>
<dbReference type="EMBL" id="CP000885">
    <property type="protein sequence ID" value="ABX43998.1"/>
    <property type="molecule type" value="Genomic_DNA"/>
</dbReference>
<dbReference type="RefSeq" id="WP_012201646.1">
    <property type="nucleotide sequence ID" value="NC_010001.1"/>
</dbReference>
<dbReference type="SMR" id="A9KJH8"/>
<dbReference type="STRING" id="357809.Cphy_3651"/>
<dbReference type="KEGG" id="cpy:Cphy_3651"/>
<dbReference type="eggNOG" id="COG0256">
    <property type="taxonomic scope" value="Bacteria"/>
</dbReference>
<dbReference type="HOGENOM" id="CLU_098841_0_1_9"/>
<dbReference type="OrthoDB" id="9810939at2"/>
<dbReference type="Proteomes" id="UP000000370">
    <property type="component" value="Chromosome"/>
</dbReference>
<dbReference type="GO" id="GO:0005737">
    <property type="term" value="C:cytoplasm"/>
    <property type="evidence" value="ECO:0007669"/>
    <property type="project" value="UniProtKB-ARBA"/>
</dbReference>
<dbReference type="GO" id="GO:1990904">
    <property type="term" value="C:ribonucleoprotein complex"/>
    <property type="evidence" value="ECO:0007669"/>
    <property type="project" value="UniProtKB-KW"/>
</dbReference>
<dbReference type="GO" id="GO:0005840">
    <property type="term" value="C:ribosome"/>
    <property type="evidence" value="ECO:0007669"/>
    <property type="project" value="UniProtKB-KW"/>
</dbReference>
<dbReference type="GO" id="GO:0008097">
    <property type="term" value="F:5S rRNA binding"/>
    <property type="evidence" value="ECO:0007669"/>
    <property type="project" value="TreeGrafter"/>
</dbReference>
<dbReference type="GO" id="GO:0003735">
    <property type="term" value="F:structural constituent of ribosome"/>
    <property type="evidence" value="ECO:0007669"/>
    <property type="project" value="InterPro"/>
</dbReference>
<dbReference type="GO" id="GO:0006412">
    <property type="term" value="P:translation"/>
    <property type="evidence" value="ECO:0007669"/>
    <property type="project" value="UniProtKB-UniRule"/>
</dbReference>
<dbReference type="CDD" id="cd00432">
    <property type="entry name" value="Ribosomal_L18_L5e"/>
    <property type="match status" value="1"/>
</dbReference>
<dbReference type="FunFam" id="3.30.420.100:FF:000001">
    <property type="entry name" value="50S ribosomal protein L18"/>
    <property type="match status" value="1"/>
</dbReference>
<dbReference type="Gene3D" id="3.30.420.100">
    <property type="match status" value="1"/>
</dbReference>
<dbReference type="HAMAP" id="MF_01337_B">
    <property type="entry name" value="Ribosomal_uL18_B"/>
    <property type="match status" value="1"/>
</dbReference>
<dbReference type="InterPro" id="IPR004389">
    <property type="entry name" value="Ribosomal_uL18_bac-type"/>
</dbReference>
<dbReference type="InterPro" id="IPR005484">
    <property type="entry name" value="Ribosomal_uL18_bac/euk"/>
</dbReference>
<dbReference type="NCBIfam" id="TIGR00060">
    <property type="entry name" value="L18_bact"/>
    <property type="match status" value="1"/>
</dbReference>
<dbReference type="PANTHER" id="PTHR12899">
    <property type="entry name" value="39S RIBOSOMAL PROTEIN L18, MITOCHONDRIAL"/>
    <property type="match status" value="1"/>
</dbReference>
<dbReference type="PANTHER" id="PTHR12899:SF3">
    <property type="entry name" value="LARGE RIBOSOMAL SUBUNIT PROTEIN UL18M"/>
    <property type="match status" value="1"/>
</dbReference>
<dbReference type="Pfam" id="PF00861">
    <property type="entry name" value="Ribosomal_L18p"/>
    <property type="match status" value="1"/>
</dbReference>
<dbReference type="SUPFAM" id="SSF53137">
    <property type="entry name" value="Translational machinery components"/>
    <property type="match status" value="1"/>
</dbReference>
<sequence length="122" mass="13359">MVKKVNKSEVRIKKHNRIRNRFSGTPTRPRLAVFRSNNHMYAQIIDDTVGNTLVSASTLEKGVKAELEKTNDVAAAAMLGTVIAKKALEKGITTVVFDRGGFIYQGKVQALAEAAREAGLNF</sequence>